<protein>
    <recommendedName>
        <fullName>Translation initiation factor eIF2B subunit epsilon</fullName>
    </recommendedName>
    <alternativeName>
        <fullName>GCD complex subunit GCD6</fullName>
    </alternativeName>
    <alternativeName>
        <fullName>Guanine nucleotide exchange factor subunit GCD6</fullName>
    </alternativeName>
    <alternativeName>
        <fullName>eIF2B GDP-GTP exchange factor subunit epsilon</fullName>
    </alternativeName>
</protein>
<proteinExistence type="inferred from homology"/>
<reference key="1">
    <citation type="journal article" date="2004" name="Proc. Natl. Acad. Sci. U.S.A.">
        <title>The diploid genome sequence of Candida albicans.</title>
        <authorList>
            <person name="Jones T."/>
            <person name="Federspiel N.A."/>
            <person name="Chibana H."/>
            <person name="Dungan J."/>
            <person name="Kalman S."/>
            <person name="Magee B.B."/>
            <person name="Newport G."/>
            <person name="Thorstenson Y.R."/>
            <person name="Agabian N."/>
            <person name="Magee P.T."/>
            <person name="Davis R.W."/>
            <person name="Scherer S."/>
        </authorList>
    </citation>
    <scope>NUCLEOTIDE SEQUENCE [LARGE SCALE GENOMIC DNA]</scope>
    <source>
        <strain>SC5314 / ATCC MYA-2876</strain>
    </source>
</reference>
<reference key="2">
    <citation type="journal article" date="2007" name="Genome Biol.">
        <title>Assembly of the Candida albicans genome into sixteen supercontigs aligned on the eight chromosomes.</title>
        <authorList>
            <person name="van het Hoog M."/>
            <person name="Rast T.J."/>
            <person name="Martchenko M."/>
            <person name="Grindle S."/>
            <person name="Dignard D."/>
            <person name="Hogues H."/>
            <person name="Cuomo C."/>
            <person name="Berriman M."/>
            <person name="Scherer S."/>
            <person name="Magee B.B."/>
            <person name="Whiteway M."/>
            <person name="Chibana H."/>
            <person name="Nantel A."/>
            <person name="Magee P.T."/>
        </authorList>
    </citation>
    <scope>GENOME REANNOTATION</scope>
    <source>
        <strain>SC5314 / ATCC MYA-2876</strain>
    </source>
</reference>
<reference key="3">
    <citation type="journal article" date="2013" name="Genome Biol.">
        <title>Assembly of a phased diploid Candida albicans genome facilitates allele-specific measurements and provides a simple model for repeat and indel structure.</title>
        <authorList>
            <person name="Muzzey D."/>
            <person name="Schwartz K."/>
            <person name="Weissman J.S."/>
            <person name="Sherlock G."/>
        </authorList>
    </citation>
    <scope>NUCLEOTIDE SEQUENCE [LARGE SCALE GENOMIC DNA]</scope>
    <scope>GENOME REANNOTATION</scope>
    <source>
        <strain>SC5314 / ATCC MYA-2876</strain>
    </source>
</reference>
<reference key="4">
    <citation type="journal article" date="1997" name="Gene">
        <title>Cloning and expression of squalene epoxidase from the pathogenic yeast Candida albicans.</title>
        <authorList>
            <person name="Favre B."/>
            <person name="Ryder N.S."/>
        </authorList>
    </citation>
    <scope>NUCLEOTIDE SEQUENCE [GENOMIC DNA] OF 544-732</scope>
    <source>
        <strain>SFI-0124</strain>
    </source>
</reference>
<name>EI2BE_CANAL</name>
<accession>P87163</accession>
<accession>A0A1D8PEB7</accession>
<accession>Q59QB1</accession>
<keyword id="KW-0963">Cytoplasm</keyword>
<keyword id="KW-0396">Initiation factor</keyword>
<keyword id="KW-0648">Protein biosynthesis</keyword>
<keyword id="KW-1185">Reference proteome</keyword>
<sequence length="732" mass="81952">MAPKSKKQAATQSKSKKSKDLVDERFQAIVLTDSFETRFMPLTAVHPRCLLPLANVPLIEYTLEFLANAGVNEVYLMCSAHADQIQEYIENSKWMGDNSPFSVTTIMSIESRSVGDTMRDLDNRGLIAGDFLLVSGDVVTNMDFSKALQFHKQKKAQDKDHIATMVLNQASPLHRTRSQIDPAAFVLDKETNRCIFYQSIPPVSGKKTCISIDPELLEDFQGELQVRNDLIDCHVDICSPHVPQIFQENFDYQYLRSDFLKGVLTSDLLKKTIYAYISKDSSEYAARVESWSTYDAISQDILARWCYPLVPDSNLVEGNSYSYELNNIYKEDKIILAQSCKIGTSTSIGRNSSVGEGTQIKNSVIGRNCTIGKNVVIENSYIWDNAVIKDNSVLNRSIVAADAQIGNNVTLSPGSVIGFNVIIGDDKVIPHNVKIVETPIVTENEFGDFDDESNSEDENEYEDGNAVPVLAVKDVELVGETGKGFAYESEIESGDEDDEEFVGNGTYSGIIYQMKSLNVSDDSIASVSNKKVKKHSHRRRLSMNSMISDNGGAFESDEGEEEEDFGVEGLATVTRAIENNHDIDTALLELNTLRMSMNVTYHDVRSVTTQALVNKIVDFITTGTLTPQEAATKIFTKWGIMFKRQVFSPEEEVDLLNIVEEKSSVLDKAYNQIVLFLGVKSFYDMEVVEEENILKWWNDGENDEVRTLAAKFITWLQEADEEDSDEDDEDSE</sequence>
<feature type="chain" id="PRO_0000156076" description="Translation initiation factor eIF2B subunit epsilon">
    <location>
        <begin position="1"/>
        <end position="732"/>
    </location>
</feature>
<feature type="domain" description="W2" evidence="2">
    <location>
        <begin position="559"/>
        <end position="726"/>
    </location>
</feature>
<evidence type="ECO:0000250" key="1">
    <source>
        <dbReference type="UniProtKB" id="P56287"/>
    </source>
</evidence>
<evidence type="ECO:0000255" key="2">
    <source>
        <dbReference type="PROSITE-ProRule" id="PRU00695"/>
    </source>
</evidence>
<evidence type="ECO:0000305" key="3"/>
<dbReference type="EMBL" id="CP017623">
    <property type="protein sequence ID" value="AOW26498.1"/>
    <property type="molecule type" value="Genomic_DNA"/>
</dbReference>
<dbReference type="EMBL" id="U69674">
    <property type="protein sequence ID" value="AAC49714.1"/>
    <property type="molecule type" value="Genomic_DNA"/>
</dbReference>
<dbReference type="RefSeq" id="XP_711895.2">
    <property type="nucleotide sequence ID" value="XM_706802.2"/>
</dbReference>
<dbReference type="SMR" id="P87163"/>
<dbReference type="BioGRID" id="1229552">
    <property type="interactions" value="2"/>
</dbReference>
<dbReference type="FunCoup" id="P87163">
    <property type="interactions" value="1230"/>
</dbReference>
<dbReference type="STRING" id="237561.P87163"/>
<dbReference type="EnsemblFungi" id="C1_08600C_A-T">
    <property type="protein sequence ID" value="C1_08600C_A-T-p1"/>
    <property type="gene ID" value="C1_08600C_A"/>
</dbReference>
<dbReference type="GeneID" id="3646510"/>
<dbReference type="KEGG" id="cal:CAALFM_C108600CA"/>
<dbReference type="CGD" id="CAL0000183518">
    <property type="gene designation" value="GCD6"/>
</dbReference>
<dbReference type="VEuPathDB" id="FungiDB:C1_08600C_A"/>
<dbReference type="eggNOG" id="KOG1461">
    <property type="taxonomic scope" value="Eukaryota"/>
</dbReference>
<dbReference type="HOGENOM" id="CLU_012507_1_0_1"/>
<dbReference type="InParanoid" id="P87163"/>
<dbReference type="OrthoDB" id="424572at2759"/>
<dbReference type="PRO" id="PR:P87163"/>
<dbReference type="Proteomes" id="UP000000559">
    <property type="component" value="Chromosome 1"/>
</dbReference>
<dbReference type="GO" id="GO:0005829">
    <property type="term" value="C:cytosol"/>
    <property type="evidence" value="ECO:0007669"/>
    <property type="project" value="UniProtKB-SubCell"/>
</dbReference>
<dbReference type="GO" id="GO:0005851">
    <property type="term" value="C:eukaryotic translation initiation factor 2B complex"/>
    <property type="evidence" value="ECO:0000250"/>
    <property type="project" value="UniProtKB"/>
</dbReference>
<dbReference type="GO" id="GO:0005085">
    <property type="term" value="F:guanyl-nucleotide exchange factor activity"/>
    <property type="evidence" value="ECO:0000250"/>
    <property type="project" value="UniProtKB"/>
</dbReference>
<dbReference type="GO" id="GO:0003743">
    <property type="term" value="F:translation initiation factor activity"/>
    <property type="evidence" value="ECO:0000250"/>
    <property type="project" value="CGD"/>
</dbReference>
<dbReference type="GO" id="GO:0031369">
    <property type="term" value="F:translation initiation factor binding"/>
    <property type="evidence" value="ECO:0000318"/>
    <property type="project" value="GO_Central"/>
</dbReference>
<dbReference type="GO" id="GO:0002183">
    <property type="term" value="P:cytoplasmic translational initiation"/>
    <property type="evidence" value="ECO:0000250"/>
    <property type="project" value="UniProtKB"/>
</dbReference>
<dbReference type="GO" id="GO:0006413">
    <property type="term" value="P:translational initiation"/>
    <property type="evidence" value="ECO:0000250"/>
    <property type="project" value="CGD"/>
</dbReference>
<dbReference type="CDD" id="cd04197">
    <property type="entry name" value="eIF-2B_epsilon_N"/>
    <property type="match status" value="1"/>
</dbReference>
<dbReference type="CDD" id="cd05787">
    <property type="entry name" value="LbH_eIF2B_epsilon"/>
    <property type="match status" value="1"/>
</dbReference>
<dbReference type="CDD" id="cd11558">
    <property type="entry name" value="W2_eIF2B_epsilon"/>
    <property type="match status" value="1"/>
</dbReference>
<dbReference type="FunFam" id="1.25.40.180:FF:000022">
    <property type="entry name" value="Translation initiation factor eIF-2B epsilon subunit"/>
    <property type="match status" value="1"/>
</dbReference>
<dbReference type="FunFam" id="3.90.550.10:FF:000066">
    <property type="entry name" value="Translation initiation factor eIF-2B subunit epsilon"/>
    <property type="match status" value="1"/>
</dbReference>
<dbReference type="FunFam" id="2.160.10.10:FF:000042">
    <property type="entry name" value="Translation initiation factor eIF2B subunit"/>
    <property type="match status" value="1"/>
</dbReference>
<dbReference type="Gene3D" id="1.25.40.180">
    <property type="match status" value="1"/>
</dbReference>
<dbReference type="Gene3D" id="2.160.10.10">
    <property type="entry name" value="Hexapeptide repeat proteins"/>
    <property type="match status" value="1"/>
</dbReference>
<dbReference type="Gene3D" id="3.90.550.10">
    <property type="entry name" value="Spore Coat Polysaccharide Biosynthesis Protein SpsA, Chain A"/>
    <property type="match status" value="1"/>
</dbReference>
<dbReference type="InterPro" id="IPR016024">
    <property type="entry name" value="ARM-type_fold"/>
</dbReference>
<dbReference type="InterPro" id="IPR035543">
    <property type="entry name" value="eIF-2B_epsilon_N"/>
</dbReference>
<dbReference type="InterPro" id="IPR051956">
    <property type="entry name" value="eIF2B_epsilon"/>
</dbReference>
<dbReference type="InterPro" id="IPR005835">
    <property type="entry name" value="NTP_transferase_dom"/>
</dbReference>
<dbReference type="InterPro" id="IPR029044">
    <property type="entry name" value="Nucleotide-diphossugar_trans"/>
</dbReference>
<dbReference type="InterPro" id="IPR011004">
    <property type="entry name" value="Trimer_LpxA-like_sf"/>
</dbReference>
<dbReference type="InterPro" id="IPR003307">
    <property type="entry name" value="W2_domain"/>
</dbReference>
<dbReference type="InterPro" id="IPR044123">
    <property type="entry name" value="W2_eIF2B_epsilon"/>
</dbReference>
<dbReference type="PANTHER" id="PTHR45887">
    <property type="entry name" value="TRANSLATION INITIATION FACTOR EIF-2B SUBUNIT EPSILON"/>
    <property type="match status" value="1"/>
</dbReference>
<dbReference type="PANTHER" id="PTHR45887:SF1">
    <property type="entry name" value="TRANSLATION INITIATION FACTOR EIF-2B SUBUNIT EPSILON"/>
    <property type="match status" value="1"/>
</dbReference>
<dbReference type="Pfam" id="PF25084">
    <property type="entry name" value="LbH_EIF2B"/>
    <property type="match status" value="1"/>
</dbReference>
<dbReference type="Pfam" id="PF00483">
    <property type="entry name" value="NTP_transferase"/>
    <property type="match status" value="1"/>
</dbReference>
<dbReference type="Pfam" id="PF02020">
    <property type="entry name" value="W2"/>
    <property type="match status" value="1"/>
</dbReference>
<dbReference type="SMART" id="SM00515">
    <property type="entry name" value="eIF5C"/>
    <property type="match status" value="1"/>
</dbReference>
<dbReference type="SUPFAM" id="SSF48371">
    <property type="entry name" value="ARM repeat"/>
    <property type="match status" value="1"/>
</dbReference>
<dbReference type="SUPFAM" id="SSF53448">
    <property type="entry name" value="Nucleotide-diphospho-sugar transferases"/>
    <property type="match status" value="1"/>
</dbReference>
<dbReference type="SUPFAM" id="SSF51161">
    <property type="entry name" value="Trimeric LpxA-like enzymes"/>
    <property type="match status" value="1"/>
</dbReference>
<dbReference type="PROSITE" id="PS51363">
    <property type="entry name" value="W2"/>
    <property type="match status" value="1"/>
</dbReference>
<organism>
    <name type="scientific">Candida albicans (strain SC5314 / ATCC MYA-2876)</name>
    <name type="common">Yeast</name>
    <dbReference type="NCBI Taxonomy" id="237561"/>
    <lineage>
        <taxon>Eukaryota</taxon>
        <taxon>Fungi</taxon>
        <taxon>Dikarya</taxon>
        <taxon>Ascomycota</taxon>
        <taxon>Saccharomycotina</taxon>
        <taxon>Pichiomycetes</taxon>
        <taxon>Debaryomycetaceae</taxon>
        <taxon>Candida/Lodderomyces clade</taxon>
        <taxon>Candida</taxon>
    </lineage>
</organism>
<comment type="function">
    <text evidence="1">Acts as a component of the translation initiation factor 2B (eIF2B) complex, which catalyzes the exchange of GDP for GTP on the eukaryotic initiation factor 2 (eIF2) complex gamma subunit. Its guanine nucleotide exchange factor activity is repressed when bound to eIF2 complex phosphorylated on the alpha subunit, thereby limiting the amount of methionyl-initiator methionine tRNA available to the ribosome and consequently global translation is repressed.</text>
</comment>
<comment type="subunit">
    <text evidence="1">Component of the translation initiation factor 2B (eIF2B) complex which is a heterodecamer of two sets of five different subunits: alpha, beta, gamma, delta and epsilon. Subunits alpha, beta and delta comprise a regulatory subcomplex and subunits epsilon and gamma comprise a catalytic subcomplex. Within the complex, the hexameric regulatory complex resides at the center, with the two heterodimeric catalytic subcomplexes bound on opposite sides.</text>
</comment>
<comment type="subcellular location">
    <subcellularLocation>
        <location evidence="1">Cytoplasm</location>
        <location evidence="1">Cytosol</location>
    </subcellularLocation>
</comment>
<comment type="similarity">
    <text evidence="3">Belongs to the eIF-2B gamma/epsilon subunits family.</text>
</comment>
<gene>
    <name type="primary">GCD6</name>
    <name type="synonym">TIF225</name>
    <name type="ordered locus">CAALFM_C108600CA</name>
    <name type="ORF">CaO19.407</name>
    <name type="ORF">CaO19.8037</name>
</gene>